<proteinExistence type="inferred from homology"/>
<comment type="subcellular location">
    <subcellularLocation>
        <location evidence="1">Membrane</location>
        <topology evidence="1">Multi-pass membrane protein</topology>
    </subcellularLocation>
</comment>
<comment type="similarity">
    <text evidence="1">Belongs to the major facilitator superfamily.</text>
</comment>
<accession>O74902</accession>
<dbReference type="EMBL" id="CU329672">
    <property type="protein sequence ID" value="CAA21054.1"/>
    <property type="molecule type" value="Genomic_DNA"/>
</dbReference>
<dbReference type="PIR" id="T41468">
    <property type="entry name" value="T41468"/>
</dbReference>
<dbReference type="RefSeq" id="NP_587690.1">
    <property type="nucleotide sequence ID" value="NM_001022685.2"/>
</dbReference>
<dbReference type="SMR" id="O74902"/>
<dbReference type="BioGRID" id="275929">
    <property type="interactions" value="14"/>
</dbReference>
<dbReference type="FunCoup" id="O74902">
    <property type="interactions" value="70"/>
</dbReference>
<dbReference type="iPTMnet" id="O74902"/>
<dbReference type="PaxDb" id="4896-SPCC613.02.1"/>
<dbReference type="EnsemblFungi" id="SPCC613.02.1">
    <property type="protein sequence ID" value="SPCC613.02.1:pep"/>
    <property type="gene ID" value="SPCC613.02"/>
</dbReference>
<dbReference type="KEGG" id="spo:2539363"/>
<dbReference type="PomBase" id="SPCC613.02"/>
<dbReference type="VEuPathDB" id="FungiDB:SPCC613.02"/>
<dbReference type="eggNOG" id="KOG2325">
    <property type="taxonomic scope" value="Eukaryota"/>
</dbReference>
<dbReference type="HOGENOM" id="CLU_042172_0_0_1"/>
<dbReference type="InParanoid" id="O74902"/>
<dbReference type="OMA" id="WNEYTAG"/>
<dbReference type="PhylomeDB" id="O74902"/>
<dbReference type="PRO" id="PR:O74902"/>
<dbReference type="Proteomes" id="UP000002485">
    <property type="component" value="Chromosome III"/>
</dbReference>
<dbReference type="GO" id="GO:0016020">
    <property type="term" value="C:membrane"/>
    <property type="evidence" value="ECO:0000318"/>
    <property type="project" value="GO_Central"/>
</dbReference>
<dbReference type="GO" id="GO:0022857">
    <property type="term" value="F:transmembrane transporter activity"/>
    <property type="evidence" value="ECO:0000318"/>
    <property type="project" value="GO_Central"/>
</dbReference>
<dbReference type="GO" id="GO:0055085">
    <property type="term" value="P:transmembrane transport"/>
    <property type="evidence" value="ECO:0000255"/>
    <property type="project" value="PomBase"/>
</dbReference>
<dbReference type="FunFam" id="1.20.1250.20:FF:001084">
    <property type="entry name" value="Uncharacterized MFS-type transporter C330.07c"/>
    <property type="match status" value="1"/>
</dbReference>
<dbReference type="Gene3D" id="1.20.1250.20">
    <property type="entry name" value="MFS general substrate transporter like domains"/>
    <property type="match status" value="1"/>
</dbReference>
<dbReference type="InterPro" id="IPR011701">
    <property type="entry name" value="MFS"/>
</dbReference>
<dbReference type="InterPro" id="IPR051068">
    <property type="entry name" value="MFS_Domain-Containing_Protein"/>
</dbReference>
<dbReference type="InterPro" id="IPR036259">
    <property type="entry name" value="MFS_trans_sf"/>
</dbReference>
<dbReference type="PANTHER" id="PTHR23510">
    <property type="entry name" value="INNER MEMBRANE TRANSPORT PROTEIN YAJR"/>
    <property type="match status" value="1"/>
</dbReference>
<dbReference type="PANTHER" id="PTHR23510:SF76">
    <property type="entry name" value="MEMBRANE TRANSPORTER"/>
    <property type="match status" value="1"/>
</dbReference>
<dbReference type="Pfam" id="PF07690">
    <property type="entry name" value="MFS_1"/>
    <property type="match status" value="1"/>
</dbReference>
<dbReference type="SUPFAM" id="SSF103473">
    <property type="entry name" value="MFS general substrate transporter"/>
    <property type="match status" value="1"/>
</dbReference>
<gene>
    <name type="ORF">SPCC613.02</name>
</gene>
<name>YCS2_SCHPO</name>
<keyword id="KW-0472">Membrane</keyword>
<keyword id="KW-1185">Reference proteome</keyword>
<keyword id="KW-0812">Transmembrane</keyword>
<keyword id="KW-1133">Transmembrane helix</keyword>
<keyword id="KW-0813">Transport</keyword>
<evidence type="ECO:0000255" key="1"/>
<evidence type="ECO:0000256" key="2">
    <source>
        <dbReference type="SAM" id="MobiDB-lite"/>
    </source>
</evidence>
<evidence type="ECO:0000312" key="3">
    <source>
        <dbReference type="EMBL" id="CAA21054.1"/>
    </source>
</evidence>
<sequence>MSISIETITKRNQYRVDQPQRQPSRLSTVASISEYQSDYSKTVFEEIELEVIPNKQNISTRSFRNDGNDSDPQTLDPDAYPPKRSIAFVLLNSILSDMSMSTALPISAAYTEILGGTDAFSGLVIGIPTMISLVCLYPMLRFANPKSANGYTLYFRPLIVSCISQIIGHLLYSLAYRAQWLYLILIGRMCNGVGFTMFLYHKKYLTDKHFVGQNRSTFLATLNILAQTVGFMAGSFLGGLLAKACMHLTNPIWNQYTVGSWFMLFAWCIYGILLSIFFKEIRADGNDSSARKPENFNGQAVKLSYTHKFMLVFLSMVAFISYFNIAGYQASVPIYAKELYHYNAFQSGNFLSLSALVIAPLVFLSTFLSKWAEDRDMMLYGFILGILALVVHLVLDVLHKVRVQPYFVLYSAMQFGFSIGSAPLISLATKQLHPKYHILVGIIVQIGISAADTVGAICGGAIFDITTVGFIALNLGIAVLVFIQLLFLWNSIKTKTG</sequence>
<organism>
    <name type="scientific">Schizosaccharomyces pombe (strain 972 / ATCC 24843)</name>
    <name type="common">Fission yeast</name>
    <dbReference type="NCBI Taxonomy" id="284812"/>
    <lineage>
        <taxon>Eukaryota</taxon>
        <taxon>Fungi</taxon>
        <taxon>Dikarya</taxon>
        <taxon>Ascomycota</taxon>
        <taxon>Taphrinomycotina</taxon>
        <taxon>Schizosaccharomycetes</taxon>
        <taxon>Schizosaccharomycetales</taxon>
        <taxon>Schizosaccharomycetaceae</taxon>
        <taxon>Schizosaccharomyces</taxon>
    </lineage>
</organism>
<reference evidence="3" key="1">
    <citation type="journal article" date="2002" name="Nature">
        <title>The genome sequence of Schizosaccharomyces pombe.</title>
        <authorList>
            <person name="Wood V."/>
            <person name="Gwilliam R."/>
            <person name="Rajandream M.A."/>
            <person name="Lyne M.H."/>
            <person name="Lyne R."/>
            <person name="Stewart A."/>
            <person name="Sgouros J.G."/>
            <person name="Peat N."/>
            <person name="Hayles J."/>
            <person name="Baker S.G."/>
            <person name="Basham D."/>
            <person name="Bowman S."/>
            <person name="Brooks K."/>
            <person name="Brown D."/>
            <person name="Brown S."/>
            <person name="Chillingworth T."/>
            <person name="Churcher C.M."/>
            <person name="Collins M."/>
            <person name="Connor R."/>
            <person name="Cronin A."/>
            <person name="Davis P."/>
            <person name="Feltwell T."/>
            <person name="Fraser A."/>
            <person name="Gentles S."/>
            <person name="Goble A."/>
            <person name="Hamlin N."/>
            <person name="Harris D.E."/>
            <person name="Hidalgo J."/>
            <person name="Hodgson G."/>
            <person name="Holroyd S."/>
            <person name="Hornsby T."/>
            <person name="Howarth S."/>
            <person name="Huckle E.J."/>
            <person name="Hunt S."/>
            <person name="Jagels K."/>
            <person name="James K.D."/>
            <person name="Jones L."/>
            <person name="Jones M."/>
            <person name="Leather S."/>
            <person name="McDonald S."/>
            <person name="McLean J."/>
            <person name="Mooney P."/>
            <person name="Moule S."/>
            <person name="Mungall K.L."/>
            <person name="Murphy L.D."/>
            <person name="Niblett D."/>
            <person name="Odell C."/>
            <person name="Oliver K."/>
            <person name="O'Neil S."/>
            <person name="Pearson D."/>
            <person name="Quail M.A."/>
            <person name="Rabbinowitsch E."/>
            <person name="Rutherford K.M."/>
            <person name="Rutter S."/>
            <person name="Saunders D."/>
            <person name="Seeger K."/>
            <person name="Sharp S."/>
            <person name="Skelton J."/>
            <person name="Simmonds M.N."/>
            <person name="Squares R."/>
            <person name="Squares S."/>
            <person name="Stevens K."/>
            <person name="Taylor K."/>
            <person name="Taylor R.G."/>
            <person name="Tivey A."/>
            <person name="Walsh S.V."/>
            <person name="Warren T."/>
            <person name="Whitehead S."/>
            <person name="Woodward J.R."/>
            <person name="Volckaert G."/>
            <person name="Aert R."/>
            <person name="Robben J."/>
            <person name="Grymonprez B."/>
            <person name="Weltjens I."/>
            <person name="Vanstreels E."/>
            <person name="Rieger M."/>
            <person name="Schaefer M."/>
            <person name="Mueller-Auer S."/>
            <person name="Gabel C."/>
            <person name="Fuchs M."/>
            <person name="Duesterhoeft A."/>
            <person name="Fritzc C."/>
            <person name="Holzer E."/>
            <person name="Moestl D."/>
            <person name="Hilbert H."/>
            <person name="Borzym K."/>
            <person name="Langer I."/>
            <person name="Beck A."/>
            <person name="Lehrach H."/>
            <person name="Reinhardt R."/>
            <person name="Pohl T.M."/>
            <person name="Eger P."/>
            <person name="Zimmermann W."/>
            <person name="Wedler H."/>
            <person name="Wambutt R."/>
            <person name="Purnelle B."/>
            <person name="Goffeau A."/>
            <person name="Cadieu E."/>
            <person name="Dreano S."/>
            <person name="Gloux S."/>
            <person name="Lelaure V."/>
            <person name="Mottier S."/>
            <person name="Galibert F."/>
            <person name="Aves S.J."/>
            <person name="Xiang Z."/>
            <person name="Hunt C."/>
            <person name="Moore K."/>
            <person name="Hurst S.M."/>
            <person name="Lucas M."/>
            <person name="Rochet M."/>
            <person name="Gaillardin C."/>
            <person name="Tallada V.A."/>
            <person name="Garzon A."/>
            <person name="Thode G."/>
            <person name="Daga R.R."/>
            <person name="Cruzado L."/>
            <person name="Jimenez J."/>
            <person name="Sanchez M."/>
            <person name="del Rey F."/>
            <person name="Benito J."/>
            <person name="Dominguez A."/>
            <person name="Revuelta J.L."/>
            <person name="Moreno S."/>
            <person name="Armstrong J."/>
            <person name="Forsburg S.L."/>
            <person name="Cerutti L."/>
            <person name="Lowe T."/>
            <person name="McCombie W.R."/>
            <person name="Paulsen I."/>
            <person name="Potashkin J."/>
            <person name="Shpakovski G.V."/>
            <person name="Ussery D."/>
            <person name="Barrell B.G."/>
            <person name="Nurse P."/>
        </authorList>
    </citation>
    <scope>NUCLEOTIDE SEQUENCE [LARGE SCALE GENOMIC DNA]</scope>
    <source>
        <strain>972 / ATCC 24843</strain>
    </source>
</reference>
<protein>
    <recommendedName>
        <fullName>Uncharacterized MFS-type transporter C613.02</fullName>
    </recommendedName>
</protein>
<feature type="chain" id="PRO_0000372710" description="Uncharacterized MFS-type transporter C613.02">
    <location>
        <begin position="1"/>
        <end position="497"/>
    </location>
</feature>
<feature type="transmembrane region" description="Helical" evidence="1">
    <location>
        <begin position="86"/>
        <end position="106"/>
    </location>
</feature>
<feature type="transmembrane region" description="Helical" evidence="1">
    <location>
        <begin position="120"/>
        <end position="140"/>
    </location>
</feature>
<feature type="transmembrane region" description="Helical" evidence="1">
    <location>
        <begin position="155"/>
        <end position="175"/>
    </location>
</feature>
<feature type="transmembrane region" description="Helical" evidence="1">
    <location>
        <begin position="180"/>
        <end position="200"/>
    </location>
</feature>
<feature type="transmembrane region" description="Helical" evidence="1">
    <location>
        <begin position="222"/>
        <end position="242"/>
    </location>
</feature>
<feature type="transmembrane region" description="Helical" evidence="1">
    <location>
        <begin position="258"/>
        <end position="278"/>
    </location>
</feature>
<feature type="transmembrane region" description="Helical" evidence="1">
    <location>
        <begin position="309"/>
        <end position="329"/>
    </location>
</feature>
<feature type="transmembrane region" description="Helical" evidence="1">
    <location>
        <begin position="348"/>
        <end position="368"/>
    </location>
</feature>
<feature type="transmembrane region" description="Helical" evidence="1">
    <location>
        <begin position="378"/>
        <end position="398"/>
    </location>
</feature>
<feature type="transmembrane region" description="Helical" evidence="1">
    <location>
        <begin position="407"/>
        <end position="427"/>
    </location>
</feature>
<feature type="transmembrane region" description="Helical" evidence="1">
    <location>
        <begin position="438"/>
        <end position="458"/>
    </location>
</feature>
<feature type="transmembrane region" description="Helical" evidence="1">
    <location>
        <begin position="468"/>
        <end position="488"/>
    </location>
</feature>
<feature type="region of interest" description="Disordered" evidence="2">
    <location>
        <begin position="58"/>
        <end position="79"/>
    </location>
</feature>